<comment type="function">
    <text evidence="1">Peptide chain release factor 2 directs the termination of translation in response to the peptide chain termination codons UGA and UAA.</text>
</comment>
<comment type="subcellular location">
    <subcellularLocation>
        <location evidence="1">Cytoplasm</location>
    </subcellularLocation>
</comment>
<comment type="PTM">
    <text evidence="1">Methylated by PrmC. Methylation increases the termination efficiency of RF2.</text>
</comment>
<comment type="similarity">
    <text evidence="1">Belongs to the prokaryotic/mitochondrial release factor family.</text>
</comment>
<dbReference type="EMBL" id="CP000462">
    <property type="protein sequence ID" value="ABK35994.1"/>
    <property type="molecule type" value="Genomic_DNA"/>
</dbReference>
<dbReference type="RefSeq" id="WP_011707133.1">
    <property type="nucleotide sequence ID" value="NC_008570.1"/>
</dbReference>
<dbReference type="RefSeq" id="YP_857857.1">
    <property type="nucleotide sequence ID" value="NC_008570.1"/>
</dbReference>
<dbReference type="SMR" id="A0KNK6"/>
<dbReference type="STRING" id="380703.AHA_3368"/>
<dbReference type="EnsemblBacteria" id="ABK35994">
    <property type="protein sequence ID" value="ABK35994"/>
    <property type="gene ID" value="AHA_3368"/>
</dbReference>
<dbReference type="GeneID" id="4489462"/>
<dbReference type="KEGG" id="aha:AHA_3368"/>
<dbReference type="PATRIC" id="fig|380703.7.peg.3367"/>
<dbReference type="eggNOG" id="COG1186">
    <property type="taxonomic scope" value="Bacteria"/>
</dbReference>
<dbReference type="HOGENOM" id="CLU_220733_2_1_6"/>
<dbReference type="OrthoDB" id="9806673at2"/>
<dbReference type="Proteomes" id="UP000000756">
    <property type="component" value="Chromosome"/>
</dbReference>
<dbReference type="GO" id="GO:0005737">
    <property type="term" value="C:cytoplasm"/>
    <property type="evidence" value="ECO:0007669"/>
    <property type="project" value="UniProtKB-SubCell"/>
</dbReference>
<dbReference type="GO" id="GO:0016149">
    <property type="term" value="F:translation release factor activity, codon specific"/>
    <property type="evidence" value="ECO:0007669"/>
    <property type="project" value="UniProtKB-UniRule"/>
</dbReference>
<dbReference type="FunFam" id="3.30.160.20:FF:000010">
    <property type="entry name" value="Peptide chain release factor 2"/>
    <property type="match status" value="1"/>
</dbReference>
<dbReference type="Gene3D" id="3.30.160.20">
    <property type="match status" value="1"/>
</dbReference>
<dbReference type="Gene3D" id="3.30.70.1660">
    <property type="match status" value="1"/>
</dbReference>
<dbReference type="Gene3D" id="1.20.58.410">
    <property type="entry name" value="Release factor"/>
    <property type="match status" value="1"/>
</dbReference>
<dbReference type="HAMAP" id="MF_00094">
    <property type="entry name" value="Rel_fac_2"/>
    <property type="match status" value="1"/>
</dbReference>
<dbReference type="InterPro" id="IPR005139">
    <property type="entry name" value="PCRF"/>
</dbReference>
<dbReference type="InterPro" id="IPR000352">
    <property type="entry name" value="Pep_chain_release_fac_I"/>
</dbReference>
<dbReference type="InterPro" id="IPR045853">
    <property type="entry name" value="Pep_chain_release_fac_I_sf"/>
</dbReference>
<dbReference type="InterPro" id="IPR004374">
    <property type="entry name" value="PrfB"/>
</dbReference>
<dbReference type="NCBIfam" id="TIGR00020">
    <property type="entry name" value="prfB"/>
    <property type="match status" value="1"/>
</dbReference>
<dbReference type="PANTHER" id="PTHR43116:SF3">
    <property type="entry name" value="CLASS I PEPTIDE CHAIN RELEASE FACTOR"/>
    <property type="match status" value="1"/>
</dbReference>
<dbReference type="PANTHER" id="PTHR43116">
    <property type="entry name" value="PEPTIDE CHAIN RELEASE FACTOR 2"/>
    <property type="match status" value="1"/>
</dbReference>
<dbReference type="Pfam" id="PF03462">
    <property type="entry name" value="PCRF"/>
    <property type="match status" value="1"/>
</dbReference>
<dbReference type="Pfam" id="PF00472">
    <property type="entry name" value="RF-1"/>
    <property type="match status" value="1"/>
</dbReference>
<dbReference type="SMART" id="SM00937">
    <property type="entry name" value="PCRF"/>
    <property type="match status" value="1"/>
</dbReference>
<dbReference type="SUPFAM" id="SSF75620">
    <property type="entry name" value="Release factor"/>
    <property type="match status" value="1"/>
</dbReference>
<dbReference type="PROSITE" id="PS00745">
    <property type="entry name" value="RF_PROK_I"/>
    <property type="match status" value="1"/>
</dbReference>
<gene>
    <name evidence="1" type="primary">prfB</name>
    <name type="ordered locus">AHA_3368</name>
</gene>
<sequence>MFEVNPVLNKLKELSERTELLRGYLDYDAKKERLEEVNAELEQPDVWNEPERAQALGKERVALENVVGTIDTLTQGADDVAMLVELAVEGEDEDTFNEAVAEADVLETKLVDLEFRRMFSGQHDPSDCYIDIQSGSGGTEAQDWANMVLRMYLRWGDAHGYKPELIECSEGDVAGIKSATIKFTGEYAFGWLRTETGVHRLVRKSPFDSGGRRHTSFCSVFVYPEIDDDIDIEINPADLRIDVYRASGAGGQHVNRTESAVRITHIPTGVVVQCQNDRSQHKNKDQCMKQLKAKLYELEIQKQNAEKQALEETKSDIGWGSQIRSYVLDDARIKDLRTGVETRNTQAVLDGDLDKFIEASLKSGL</sequence>
<organism>
    <name type="scientific">Aeromonas hydrophila subsp. hydrophila (strain ATCC 7966 / DSM 30187 / BCRC 13018 / CCUG 14551 / JCM 1027 / KCTC 2358 / NCIMB 9240 / NCTC 8049)</name>
    <dbReference type="NCBI Taxonomy" id="380703"/>
    <lineage>
        <taxon>Bacteria</taxon>
        <taxon>Pseudomonadati</taxon>
        <taxon>Pseudomonadota</taxon>
        <taxon>Gammaproteobacteria</taxon>
        <taxon>Aeromonadales</taxon>
        <taxon>Aeromonadaceae</taxon>
        <taxon>Aeromonas</taxon>
    </lineage>
</organism>
<reference key="1">
    <citation type="journal article" date="2006" name="J. Bacteriol.">
        <title>Genome sequence of Aeromonas hydrophila ATCC 7966T: jack of all trades.</title>
        <authorList>
            <person name="Seshadri R."/>
            <person name="Joseph S.W."/>
            <person name="Chopra A.K."/>
            <person name="Sha J."/>
            <person name="Shaw J."/>
            <person name="Graf J."/>
            <person name="Haft D.H."/>
            <person name="Wu M."/>
            <person name="Ren Q."/>
            <person name="Rosovitz M.J."/>
            <person name="Madupu R."/>
            <person name="Tallon L."/>
            <person name="Kim M."/>
            <person name="Jin S."/>
            <person name="Vuong H."/>
            <person name="Stine O.C."/>
            <person name="Ali A."/>
            <person name="Horneman A.J."/>
            <person name="Heidelberg J.F."/>
        </authorList>
    </citation>
    <scope>NUCLEOTIDE SEQUENCE [LARGE SCALE GENOMIC DNA]</scope>
    <source>
        <strain>ATCC 7966 / DSM 30187 / BCRC 13018 / CCUG 14551 / JCM 1027 / KCTC 2358 / NCIMB 9240 / NCTC 8049</strain>
    </source>
</reference>
<feature type="chain" id="PRO_1000004970" description="Peptide chain release factor 2">
    <location>
        <begin position="1"/>
        <end position="365"/>
    </location>
</feature>
<feature type="modified residue" description="N5-methylglutamine" evidence="1">
    <location>
        <position position="252"/>
    </location>
</feature>
<evidence type="ECO:0000255" key="1">
    <source>
        <dbReference type="HAMAP-Rule" id="MF_00094"/>
    </source>
</evidence>
<accession>A0KNK6</accession>
<name>RF2_AERHH</name>
<protein>
    <recommendedName>
        <fullName evidence="1">Peptide chain release factor 2</fullName>
        <shortName evidence="1">RF-2</shortName>
    </recommendedName>
</protein>
<keyword id="KW-0963">Cytoplasm</keyword>
<keyword id="KW-0488">Methylation</keyword>
<keyword id="KW-0648">Protein biosynthesis</keyword>
<keyword id="KW-1185">Reference proteome</keyword>
<proteinExistence type="inferred from homology"/>